<reference key="1">
    <citation type="journal article" date="2002" name="Nucleic Acids Res.">
        <title>Genome sequence of Oceanobacillus iheyensis isolated from the Iheya Ridge and its unexpected adaptive capabilities to extreme environments.</title>
        <authorList>
            <person name="Takami H."/>
            <person name="Takaki Y."/>
            <person name="Uchiyama I."/>
        </authorList>
    </citation>
    <scope>NUCLEOTIDE SEQUENCE [LARGE SCALE GENOMIC DNA]</scope>
    <source>
        <strain>DSM 14371 / CIP 107618 / JCM 11309 / KCTC 3954 / HTE831</strain>
    </source>
</reference>
<proteinExistence type="inferred from homology"/>
<dbReference type="EC" id="1.1.5.4" evidence="1"/>
<dbReference type="EMBL" id="BA000028">
    <property type="protein sequence ID" value="BAC12902.1"/>
    <property type="molecule type" value="Genomic_DNA"/>
</dbReference>
<dbReference type="RefSeq" id="WP_011065348.1">
    <property type="nucleotide sequence ID" value="NC_004193.1"/>
</dbReference>
<dbReference type="SMR" id="Q8CV11"/>
<dbReference type="STRING" id="221109.gene:10733184"/>
<dbReference type="KEGG" id="oih:OB0946"/>
<dbReference type="eggNOG" id="COG0579">
    <property type="taxonomic scope" value="Bacteria"/>
</dbReference>
<dbReference type="HOGENOM" id="CLU_028151_0_0_9"/>
<dbReference type="OrthoDB" id="9763983at2"/>
<dbReference type="PhylomeDB" id="Q8CV11"/>
<dbReference type="UniPathway" id="UPA00223">
    <property type="reaction ID" value="UER01008"/>
</dbReference>
<dbReference type="Proteomes" id="UP000000822">
    <property type="component" value="Chromosome"/>
</dbReference>
<dbReference type="GO" id="GO:0047545">
    <property type="term" value="F:2-hydroxyglutarate dehydrogenase activity"/>
    <property type="evidence" value="ECO:0007669"/>
    <property type="project" value="TreeGrafter"/>
</dbReference>
<dbReference type="GO" id="GO:0008924">
    <property type="term" value="F:L-malate dehydrogenase (quinone) activity"/>
    <property type="evidence" value="ECO:0007669"/>
    <property type="project" value="UniProtKB-UniRule"/>
</dbReference>
<dbReference type="GO" id="GO:0006099">
    <property type="term" value="P:tricarboxylic acid cycle"/>
    <property type="evidence" value="ECO:0007669"/>
    <property type="project" value="UniProtKB-UniRule"/>
</dbReference>
<dbReference type="Gene3D" id="3.30.9.10">
    <property type="entry name" value="D-Amino Acid Oxidase, subunit A, domain 2"/>
    <property type="match status" value="1"/>
</dbReference>
<dbReference type="Gene3D" id="3.50.50.60">
    <property type="entry name" value="FAD/NAD(P)-binding domain"/>
    <property type="match status" value="1"/>
</dbReference>
<dbReference type="HAMAP" id="MF_00212">
    <property type="entry name" value="MQO"/>
    <property type="match status" value="1"/>
</dbReference>
<dbReference type="InterPro" id="IPR036188">
    <property type="entry name" value="FAD/NAD-bd_sf"/>
</dbReference>
<dbReference type="InterPro" id="IPR006231">
    <property type="entry name" value="MQO"/>
</dbReference>
<dbReference type="NCBIfam" id="TIGR01320">
    <property type="entry name" value="mal_quin_oxido"/>
    <property type="match status" value="1"/>
</dbReference>
<dbReference type="NCBIfam" id="NF003603">
    <property type="entry name" value="PRK05257.1-1"/>
    <property type="match status" value="1"/>
</dbReference>
<dbReference type="NCBIfam" id="NF003604">
    <property type="entry name" value="PRK05257.1-3"/>
    <property type="match status" value="1"/>
</dbReference>
<dbReference type="NCBIfam" id="NF003605">
    <property type="entry name" value="PRK05257.1-4"/>
    <property type="match status" value="1"/>
</dbReference>
<dbReference type="NCBIfam" id="NF003606">
    <property type="entry name" value="PRK05257.2-1"/>
    <property type="match status" value="1"/>
</dbReference>
<dbReference type="NCBIfam" id="NF003608">
    <property type="entry name" value="PRK05257.2-4"/>
    <property type="match status" value="1"/>
</dbReference>
<dbReference type="NCBIfam" id="NF003611">
    <property type="entry name" value="PRK05257.3-2"/>
    <property type="match status" value="1"/>
</dbReference>
<dbReference type="NCBIfam" id="NF009875">
    <property type="entry name" value="PRK13339.1"/>
    <property type="match status" value="1"/>
</dbReference>
<dbReference type="PANTHER" id="PTHR43104">
    <property type="entry name" value="L-2-HYDROXYGLUTARATE DEHYDROGENASE, MITOCHONDRIAL"/>
    <property type="match status" value="1"/>
</dbReference>
<dbReference type="PANTHER" id="PTHR43104:SF2">
    <property type="entry name" value="L-2-HYDROXYGLUTARATE DEHYDROGENASE, MITOCHONDRIAL"/>
    <property type="match status" value="1"/>
</dbReference>
<dbReference type="Pfam" id="PF06039">
    <property type="entry name" value="Mqo"/>
    <property type="match status" value="1"/>
</dbReference>
<dbReference type="SUPFAM" id="SSF51905">
    <property type="entry name" value="FAD/NAD(P)-binding domain"/>
    <property type="match status" value="1"/>
</dbReference>
<name>MQO_OCEIH</name>
<sequence length="502" mass="56073">MSNKHTQADVILIGAGIMSATLGSLLKELSPNLEIRVFEKLENPGEESSNEWNNAGTGHSALCELNYTSERTDGSIDINKAVKVNEQFQLSRQFWSYLVNRNLIRNPEDFIRALPHISLVQGEDNVTFLRKRFKALVNHPLFNGMEFSDDNEKLKEWMPLIMDKRDTNEPIAATKIDSGTDVNFGALTRLLFQEFDHKGIDVNYNHSVEDIKRNSEGLWEVKVHDMNDEKIEYHTAKFVFIGAGGGSLPLLQKTGIKESKHIGGFPVSGLFMVCNNPEVIEQHHAKVYGKAKVGAPPMSVPHLDTRFIDGKKSLLFGPFAGFSPKFLKTGSLFDLMHSVKSDNLFTMLSAGMKELPLTKYLIQQVVLSNEKRMEELREFIPNAQSKDWDIVIAGQRVQVIKDTEDGGKGTLQFGTEVVCGEDGTMAALLGASPGASTAVHVMLEVIQKCFPEHLQEWEPKIKEMIPSYGIALSENPELYKEIEVSIEKALGLKNEEPMVIPS</sequence>
<gene>
    <name evidence="1" type="primary">mqo</name>
    <name type="ordered locus">OB0946</name>
</gene>
<comment type="catalytic activity">
    <reaction evidence="1">
        <text>(S)-malate + a quinone = a quinol + oxaloacetate</text>
        <dbReference type="Rhea" id="RHEA:46012"/>
        <dbReference type="ChEBI" id="CHEBI:15589"/>
        <dbReference type="ChEBI" id="CHEBI:16452"/>
        <dbReference type="ChEBI" id="CHEBI:24646"/>
        <dbReference type="ChEBI" id="CHEBI:132124"/>
        <dbReference type="EC" id="1.1.5.4"/>
    </reaction>
</comment>
<comment type="cofactor">
    <cofactor evidence="1">
        <name>FAD</name>
        <dbReference type="ChEBI" id="CHEBI:57692"/>
    </cofactor>
</comment>
<comment type="pathway">
    <text evidence="1">Carbohydrate metabolism; tricarboxylic acid cycle; oxaloacetate from (S)-malate (quinone route): step 1/1.</text>
</comment>
<comment type="similarity">
    <text evidence="1">Belongs to the MQO family.</text>
</comment>
<organism>
    <name type="scientific">Oceanobacillus iheyensis (strain DSM 14371 / CIP 107618 / JCM 11309 / KCTC 3954 / HTE831)</name>
    <dbReference type="NCBI Taxonomy" id="221109"/>
    <lineage>
        <taxon>Bacteria</taxon>
        <taxon>Bacillati</taxon>
        <taxon>Bacillota</taxon>
        <taxon>Bacilli</taxon>
        <taxon>Bacillales</taxon>
        <taxon>Bacillaceae</taxon>
        <taxon>Oceanobacillus</taxon>
    </lineage>
</organism>
<keyword id="KW-0274">FAD</keyword>
<keyword id="KW-0285">Flavoprotein</keyword>
<keyword id="KW-0560">Oxidoreductase</keyword>
<keyword id="KW-1185">Reference proteome</keyword>
<keyword id="KW-0816">Tricarboxylic acid cycle</keyword>
<accession>Q8CV11</accession>
<protein>
    <recommendedName>
        <fullName evidence="1">Probable malate:quinone oxidoreductase</fullName>
        <ecNumber evidence="1">1.1.5.4</ecNumber>
    </recommendedName>
    <alternativeName>
        <fullName evidence="1">MQO</fullName>
    </alternativeName>
    <alternativeName>
        <fullName evidence="1">Malate dehydrogenase [quinone]</fullName>
    </alternativeName>
</protein>
<evidence type="ECO:0000255" key="1">
    <source>
        <dbReference type="HAMAP-Rule" id="MF_00212"/>
    </source>
</evidence>
<feature type="chain" id="PRO_0000128725" description="Probable malate:quinone oxidoreductase">
    <location>
        <begin position="1"/>
        <end position="502"/>
    </location>
</feature>